<dbReference type="EC" id="3.6.5.-" evidence="1"/>
<dbReference type="EMBL" id="CP000472">
    <property type="protein sequence ID" value="ACJ30759.1"/>
    <property type="molecule type" value="Genomic_DNA"/>
</dbReference>
<dbReference type="RefSeq" id="WP_020914100.1">
    <property type="nucleotide sequence ID" value="NC_011566.1"/>
</dbReference>
<dbReference type="SMR" id="B8CSY3"/>
<dbReference type="STRING" id="225849.swp_4095"/>
<dbReference type="KEGG" id="swp:swp_4095"/>
<dbReference type="eggNOG" id="COG0536">
    <property type="taxonomic scope" value="Bacteria"/>
</dbReference>
<dbReference type="HOGENOM" id="CLU_011747_2_0_6"/>
<dbReference type="OrthoDB" id="9807318at2"/>
<dbReference type="Proteomes" id="UP000000753">
    <property type="component" value="Chromosome"/>
</dbReference>
<dbReference type="GO" id="GO:0005737">
    <property type="term" value="C:cytoplasm"/>
    <property type="evidence" value="ECO:0007669"/>
    <property type="project" value="UniProtKB-SubCell"/>
</dbReference>
<dbReference type="GO" id="GO:0005525">
    <property type="term" value="F:GTP binding"/>
    <property type="evidence" value="ECO:0007669"/>
    <property type="project" value="UniProtKB-UniRule"/>
</dbReference>
<dbReference type="GO" id="GO:0003924">
    <property type="term" value="F:GTPase activity"/>
    <property type="evidence" value="ECO:0007669"/>
    <property type="project" value="UniProtKB-UniRule"/>
</dbReference>
<dbReference type="GO" id="GO:0000287">
    <property type="term" value="F:magnesium ion binding"/>
    <property type="evidence" value="ECO:0007669"/>
    <property type="project" value="InterPro"/>
</dbReference>
<dbReference type="GO" id="GO:0042254">
    <property type="term" value="P:ribosome biogenesis"/>
    <property type="evidence" value="ECO:0007669"/>
    <property type="project" value="UniProtKB-UniRule"/>
</dbReference>
<dbReference type="CDD" id="cd01898">
    <property type="entry name" value="Obg"/>
    <property type="match status" value="1"/>
</dbReference>
<dbReference type="FunFam" id="2.70.210.12:FF:000001">
    <property type="entry name" value="GTPase Obg"/>
    <property type="match status" value="1"/>
</dbReference>
<dbReference type="Gene3D" id="2.70.210.12">
    <property type="entry name" value="GTP1/OBG domain"/>
    <property type="match status" value="1"/>
</dbReference>
<dbReference type="Gene3D" id="3.40.50.300">
    <property type="entry name" value="P-loop containing nucleotide triphosphate hydrolases"/>
    <property type="match status" value="1"/>
</dbReference>
<dbReference type="HAMAP" id="MF_01454">
    <property type="entry name" value="GTPase_Obg"/>
    <property type="match status" value="1"/>
</dbReference>
<dbReference type="InterPro" id="IPR031167">
    <property type="entry name" value="G_OBG"/>
</dbReference>
<dbReference type="InterPro" id="IPR006073">
    <property type="entry name" value="GTP-bd"/>
</dbReference>
<dbReference type="InterPro" id="IPR014100">
    <property type="entry name" value="GTP-bd_Obg/CgtA"/>
</dbReference>
<dbReference type="InterPro" id="IPR006074">
    <property type="entry name" value="GTP1-OBG_CS"/>
</dbReference>
<dbReference type="InterPro" id="IPR006169">
    <property type="entry name" value="GTP1_OBG_dom"/>
</dbReference>
<dbReference type="InterPro" id="IPR036726">
    <property type="entry name" value="GTP1_OBG_dom_sf"/>
</dbReference>
<dbReference type="InterPro" id="IPR045086">
    <property type="entry name" value="OBG_GTPase"/>
</dbReference>
<dbReference type="InterPro" id="IPR027417">
    <property type="entry name" value="P-loop_NTPase"/>
</dbReference>
<dbReference type="NCBIfam" id="TIGR02729">
    <property type="entry name" value="Obg_CgtA"/>
    <property type="match status" value="1"/>
</dbReference>
<dbReference type="NCBIfam" id="NF008955">
    <property type="entry name" value="PRK12297.1"/>
    <property type="match status" value="1"/>
</dbReference>
<dbReference type="NCBIfam" id="NF008956">
    <property type="entry name" value="PRK12299.1"/>
    <property type="match status" value="1"/>
</dbReference>
<dbReference type="PANTHER" id="PTHR11702">
    <property type="entry name" value="DEVELOPMENTALLY REGULATED GTP-BINDING PROTEIN-RELATED"/>
    <property type="match status" value="1"/>
</dbReference>
<dbReference type="PANTHER" id="PTHR11702:SF31">
    <property type="entry name" value="MITOCHONDRIAL RIBOSOME-ASSOCIATED GTPASE 2"/>
    <property type="match status" value="1"/>
</dbReference>
<dbReference type="Pfam" id="PF01018">
    <property type="entry name" value="GTP1_OBG"/>
    <property type="match status" value="1"/>
</dbReference>
<dbReference type="Pfam" id="PF01926">
    <property type="entry name" value="MMR_HSR1"/>
    <property type="match status" value="1"/>
</dbReference>
<dbReference type="PIRSF" id="PIRSF002401">
    <property type="entry name" value="GTP_bd_Obg/CgtA"/>
    <property type="match status" value="1"/>
</dbReference>
<dbReference type="PRINTS" id="PR00326">
    <property type="entry name" value="GTP1OBG"/>
</dbReference>
<dbReference type="SUPFAM" id="SSF82051">
    <property type="entry name" value="Obg GTP-binding protein N-terminal domain"/>
    <property type="match status" value="1"/>
</dbReference>
<dbReference type="SUPFAM" id="SSF52540">
    <property type="entry name" value="P-loop containing nucleoside triphosphate hydrolases"/>
    <property type="match status" value="1"/>
</dbReference>
<dbReference type="PROSITE" id="PS51710">
    <property type="entry name" value="G_OBG"/>
    <property type="match status" value="1"/>
</dbReference>
<dbReference type="PROSITE" id="PS00905">
    <property type="entry name" value="GTP1_OBG"/>
    <property type="match status" value="1"/>
</dbReference>
<dbReference type="PROSITE" id="PS51883">
    <property type="entry name" value="OBG"/>
    <property type="match status" value="1"/>
</dbReference>
<protein>
    <recommendedName>
        <fullName evidence="1">GTPase Obg</fullName>
        <ecNumber evidence="1">3.6.5.-</ecNumber>
    </recommendedName>
    <alternativeName>
        <fullName evidence="1">GTP-binding protein Obg</fullName>
    </alternativeName>
</protein>
<accession>B8CSY3</accession>
<name>OBG_SHEPW</name>
<proteinExistence type="inferred from homology"/>
<gene>
    <name evidence="1" type="primary">obg</name>
    <name type="ordered locus">swp_4095</name>
</gene>
<reference key="1">
    <citation type="journal article" date="2008" name="PLoS ONE">
        <title>Environmental adaptation: genomic analysis of the piezotolerant and psychrotolerant deep-sea iron reducing bacterium Shewanella piezotolerans WP3.</title>
        <authorList>
            <person name="Wang F."/>
            <person name="Wang J."/>
            <person name="Jian H."/>
            <person name="Zhang B."/>
            <person name="Li S."/>
            <person name="Wang F."/>
            <person name="Zeng X."/>
            <person name="Gao L."/>
            <person name="Bartlett D.H."/>
            <person name="Yu J."/>
            <person name="Hu S."/>
            <person name="Xiao X."/>
        </authorList>
    </citation>
    <scope>NUCLEOTIDE SEQUENCE [LARGE SCALE GENOMIC DNA]</scope>
    <source>
        <strain>WP3 / JCM 13877</strain>
    </source>
</reference>
<comment type="function">
    <text evidence="1">An essential GTPase which binds GTP, GDP and possibly (p)ppGpp with moderate affinity, with high nucleotide exchange rates and a fairly low GTP hydrolysis rate. Plays a role in control of the cell cycle, stress response, ribosome biogenesis and in those bacteria that undergo differentiation, in morphogenesis control.</text>
</comment>
<comment type="cofactor">
    <cofactor evidence="1">
        <name>Mg(2+)</name>
        <dbReference type="ChEBI" id="CHEBI:18420"/>
    </cofactor>
</comment>
<comment type="subunit">
    <text evidence="1">Monomer.</text>
</comment>
<comment type="subcellular location">
    <subcellularLocation>
        <location evidence="1">Cytoplasm</location>
    </subcellularLocation>
</comment>
<comment type="similarity">
    <text evidence="1">Belongs to the TRAFAC class OBG-HflX-like GTPase superfamily. OBG GTPase family.</text>
</comment>
<evidence type="ECO:0000255" key="1">
    <source>
        <dbReference type="HAMAP-Rule" id="MF_01454"/>
    </source>
</evidence>
<evidence type="ECO:0000255" key="2">
    <source>
        <dbReference type="PROSITE-ProRule" id="PRU01231"/>
    </source>
</evidence>
<evidence type="ECO:0000256" key="3">
    <source>
        <dbReference type="SAM" id="MobiDB-lite"/>
    </source>
</evidence>
<organism>
    <name type="scientific">Shewanella piezotolerans (strain WP3 / JCM 13877)</name>
    <dbReference type="NCBI Taxonomy" id="225849"/>
    <lineage>
        <taxon>Bacteria</taxon>
        <taxon>Pseudomonadati</taxon>
        <taxon>Pseudomonadota</taxon>
        <taxon>Gammaproteobacteria</taxon>
        <taxon>Alteromonadales</taxon>
        <taxon>Shewanellaceae</taxon>
        <taxon>Shewanella</taxon>
    </lineage>
</organism>
<sequence length="388" mass="42546">MKFVDEATIRVEAGNGGSGCVSFRREKYVPDGGPDGGDGGDGGSVYLQADENLNTLITYQFERFHNAERGKNGRGRDCTGHGGEDLVLKVPVGTRAVDAETEETLGDLTTHGQKMLVAKGGFHGLGNTRFKSSTNRAPRQKTLGTDGEVRSLRLELMLLADVGLLGMPNAGKSTFIRSVSKAKPKVADYPFTTLVPNLGVVNPRPGQSFVIADIPGLIEGAADGAGLGVQFLKHLERCRVLLHILDIEPIDGSNPVDSARAIVGELEKHSPKLAGKPRWLVINKADLMLEEELQEKIDKVVEELAWDGEVFTISAYNREGTAELALKLLDFIDTLPPEEEVDVEAEVEFKWDNYHQNANESVNEDYDDDLDDDDYDDDDYDVEVIYQR</sequence>
<keyword id="KW-0963">Cytoplasm</keyword>
<keyword id="KW-0342">GTP-binding</keyword>
<keyword id="KW-0378">Hydrolase</keyword>
<keyword id="KW-0460">Magnesium</keyword>
<keyword id="KW-0479">Metal-binding</keyword>
<keyword id="KW-0547">Nucleotide-binding</keyword>
<feature type="chain" id="PRO_0000386246" description="GTPase Obg">
    <location>
        <begin position="1"/>
        <end position="388"/>
    </location>
</feature>
<feature type="domain" description="Obg" evidence="2">
    <location>
        <begin position="1"/>
        <end position="159"/>
    </location>
</feature>
<feature type="domain" description="OBG-type G" evidence="1">
    <location>
        <begin position="160"/>
        <end position="333"/>
    </location>
</feature>
<feature type="region of interest" description="Disordered" evidence="3">
    <location>
        <begin position="356"/>
        <end position="377"/>
    </location>
</feature>
<feature type="compositionally biased region" description="Acidic residues" evidence="3">
    <location>
        <begin position="362"/>
        <end position="377"/>
    </location>
</feature>
<feature type="binding site" evidence="1">
    <location>
        <begin position="166"/>
        <end position="173"/>
    </location>
    <ligand>
        <name>GTP</name>
        <dbReference type="ChEBI" id="CHEBI:37565"/>
    </ligand>
</feature>
<feature type="binding site" evidence="1">
    <location>
        <position position="173"/>
    </location>
    <ligand>
        <name>Mg(2+)</name>
        <dbReference type="ChEBI" id="CHEBI:18420"/>
    </ligand>
</feature>
<feature type="binding site" evidence="1">
    <location>
        <begin position="191"/>
        <end position="195"/>
    </location>
    <ligand>
        <name>GTP</name>
        <dbReference type="ChEBI" id="CHEBI:37565"/>
    </ligand>
</feature>
<feature type="binding site" evidence="1">
    <location>
        <position position="193"/>
    </location>
    <ligand>
        <name>Mg(2+)</name>
        <dbReference type="ChEBI" id="CHEBI:18420"/>
    </ligand>
</feature>
<feature type="binding site" evidence="1">
    <location>
        <begin position="213"/>
        <end position="216"/>
    </location>
    <ligand>
        <name>GTP</name>
        <dbReference type="ChEBI" id="CHEBI:37565"/>
    </ligand>
</feature>
<feature type="binding site" evidence="1">
    <location>
        <begin position="283"/>
        <end position="286"/>
    </location>
    <ligand>
        <name>GTP</name>
        <dbReference type="ChEBI" id="CHEBI:37565"/>
    </ligand>
</feature>
<feature type="binding site" evidence="1">
    <location>
        <begin position="314"/>
        <end position="316"/>
    </location>
    <ligand>
        <name>GTP</name>
        <dbReference type="ChEBI" id="CHEBI:37565"/>
    </ligand>
</feature>